<sequence length="229" mass="26256">MDKKRSSLKGSLLLLLLLVSDLLLCKSVASLPICPSGAVNCQVSLRELFDRAVILSHYIHNLSSEMFNEFDKRYAQGRGFVTKAINSCHTSSLSTPEDKEQAQQIHHEDLLNLILRVLRSWNDPLYHLVSEVRGMQEAPEAILSKAIEIEEQNRRLLEGMEKIVGQVQPRIKENEVYSVWSGLPSLQMADEDSRLFAFYNLLHCLRRDSHKIDNYLKLLKCRIVYDSNC</sequence>
<comment type="function">
    <text>Prolactin acts primarily on the mammary gland by promoting lactation.</text>
</comment>
<comment type="subunit">
    <text evidence="2">Interacts with PRLR.</text>
</comment>
<comment type="subcellular location">
    <subcellularLocation>
        <location>Secreted</location>
    </subcellularLocation>
</comment>
<comment type="similarity">
    <text evidence="5">Belongs to the somatotropin/prolactin family.</text>
</comment>
<keyword id="KW-0903">Direct protein sequencing</keyword>
<keyword id="KW-1015">Disulfide bond</keyword>
<keyword id="KW-0325">Glycoprotein</keyword>
<keyword id="KW-0372">Hormone</keyword>
<keyword id="KW-0421">Lactation</keyword>
<keyword id="KW-0597">Phosphoprotein</keyword>
<keyword id="KW-1185">Reference proteome</keyword>
<keyword id="KW-0964">Secreted</keyword>
<keyword id="KW-0732">Signal</keyword>
<feature type="signal peptide" evidence="4">
    <location>
        <begin position="1"/>
        <end position="30"/>
    </location>
</feature>
<feature type="chain" id="PRO_0000032915" description="Prolactin">
    <location>
        <begin position="31"/>
        <end position="229"/>
    </location>
</feature>
<feature type="modified residue" description="Phosphoserine" evidence="3">
    <location>
        <position position="56"/>
    </location>
</feature>
<feature type="modified residue" description="Phosphoserine" evidence="3">
    <location>
        <position position="64"/>
    </location>
</feature>
<feature type="modified residue" description="Phosphoserine" evidence="3">
    <location>
        <position position="120"/>
    </location>
</feature>
<feature type="glycosylation site" description="N-linked (GlcNAc...) asparagine; partial">
    <location>
        <position position="61"/>
    </location>
</feature>
<feature type="disulfide bond" evidence="1">
    <location>
        <begin position="34"/>
        <end position="41"/>
    </location>
</feature>
<feature type="disulfide bond" evidence="1">
    <location>
        <begin position="88"/>
        <end position="204"/>
    </location>
</feature>
<feature type="disulfide bond" evidence="1">
    <location>
        <begin position="221"/>
        <end position="229"/>
    </location>
</feature>
<feature type="sequence conflict" description="In Ref. 2; AA sequence." evidence="5" ref="2">
    <original>R</original>
    <variation>K</variation>
    <location>
        <position position="119"/>
    </location>
</feature>
<proteinExistence type="evidence at protein level"/>
<protein>
    <recommendedName>
        <fullName>Prolactin</fullName>
        <shortName>PRL</shortName>
    </recommendedName>
</protein>
<dbReference type="EMBL" id="AY373339">
    <property type="protein sequence ID" value="AAQ76548.1"/>
    <property type="molecule type" value="mRNA"/>
</dbReference>
<dbReference type="PIR" id="JK0016">
    <property type="entry name" value="LCHO"/>
</dbReference>
<dbReference type="RefSeq" id="NP_001075365.1">
    <property type="nucleotide sequence ID" value="NM_001081896.3"/>
</dbReference>
<dbReference type="SMR" id="P12420"/>
<dbReference type="FunCoup" id="P12420">
    <property type="interactions" value="286"/>
</dbReference>
<dbReference type="STRING" id="9796.ENSECAP00000000120"/>
<dbReference type="GlyCosmos" id="P12420">
    <property type="glycosylation" value="1 site, No reported glycans"/>
</dbReference>
<dbReference type="PaxDb" id="9796-ENSECAP00000000120"/>
<dbReference type="GeneID" id="100034034"/>
<dbReference type="KEGG" id="ecb:100034034"/>
<dbReference type="CTD" id="5617"/>
<dbReference type="HOGENOM" id="CLU_088274_0_1_1"/>
<dbReference type="InParanoid" id="P12420"/>
<dbReference type="OrthoDB" id="9946219at2759"/>
<dbReference type="Proteomes" id="UP000002281">
    <property type="component" value="Unplaced"/>
</dbReference>
<dbReference type="GO" id="GO:0005615">
    <property type="term" value="C:extracellular space"/>
    <property type="evidence" value="ECO:0000318"/>
    <property type="project" value="GO_Central"/>
</dbReference>
<dbReference type="GO" id="GO:0005179">
    <property type="term" value="F:hormone activity"/>
    <property type="evidence" value="ECO:0000318"/>
    <property type="project" value="GO_Central"/>
</dbReference>
<dbReference type="GO" id="GO:0005148">
    <property type="term" value="F:prolactin receptor binding"/>
    <property type="evidence" value="ECO:0000318"/>
    <property type="project" value="GO_Central"/>
</dbReference>
<dbReference type="GO" id="GO:0007166">
    <property type="term" value="P:cell surface receptor signaling pathway"/>
    <property type="evidence" value="ECO:0000318"/>
    <property type="project" value="GO_Central"/>
</dbReference>
<dbReference type="GO" id="GO:0007565">
    <property type="term" value="P:female pregnancy"/>
    <property type="evidence" value="ECO:0000318"/>
    <property type="project" value="GO_Central"/>
</dbReference>
<dbReference type="GO" id="GO:0007595">
    <property type="term" value="P:lactation"/>
    <property type="evidence" value="ECO:0007669"/>
    <property type="project" value="UniProtKB-KW"/>
</dbReference>
<dbReference type="GO" id="GO:0030879">
    <property type="term" value="P:mammary gland development"/>
    <property type="evidence" value="ECO:0000318"/>
    <property type="project" value="GO_Central"/>
</dbReference>
<dbReference type="GO" id="GO:1903489">
    <property type="term" value="P:positive regulation of lactation"/>
    <property type="evidence" value="ECO:0000318"/>
    <property type="project" value="GO_Central"/>
</dbReference>
<dbReference type="GO" id="GO:0046427">
    <property type="term" value="P:positive regulation of receptor signaling pathway via JAK-STAT"/>
    <property type="evidence" value="ECO:0000318"/>
    <property type="project" value="GO_Central"/>
</dbReference>
<dbReference type="GO" id="GO:0031667">
    <property type="term" value="P:response to nutrient levels"/>
    <property type="evidence" value="ECO:0000318"/>
    <property type="project" value="GO_Central"/>
</dbReference>
<dbReference type="CDD" id="cd10288">
    <property type="entry name" value="prolactin_like"/>
    <property type="match status" value="1"/>
</dbReference>
<dbReference type="FunFam" id="1.20.1250.10:FF:000003">
    <property type="entry name" value="Prolactin"/>
    <property type="match status" value="1"/>
</dbReference>
<dbReference type="Gene3D" id="1.20.1250.10">
    <property type="match status" value="1"/>
</dbReference>
<dbReference type="InterPro" id="IPR009079">
    <property type="entry name" value="4_helix_cytokine-like_core"/>
</dbReference>
<dbReference type="InterPro" id="IPR001400">
    <property type="entry name" value="Somatotropin/Prolactin"/>
</dbReference>
<dbReference type="InterPro" id="IPR018116">
    <property type="entry name" value="Somatotropin_CS"/>
</dbReference>
<dbReference type="PANTHER" id="PTHR11417:SF5">
    <property type="entry name" value="PROLACTIN"/>
    <property type="match status" value="1"/>
</dbReference>
<dbReference type="PANTHER" id="PTHR11417">
    <property type="entry name" value="SOMATOTROPIN,PROLACTIN"/>
    <property type="match status" value="1"/>
</dbReference>
<dbReference type="Pfam" id="PF00103">
    <property type="entry name" value="Hormone_1"/>
    <property type="match status" value="1"/>
</dbReference>
<dbReference type="PRINTS" id="PR00836">
    <property type="entry name" value="SOMATOTROPIN"/>
</dbReference>
<dbReference type="SUPFAM" id="SSF47266">
    <property type="entry name" value="4-helical cytokines"/>
    <property type="match status" value="1"/>
</dbReference>
<dbReference type="PROSITE" id="PS00266">
    <property type="entry name" value="SOMATOTROPIN_1"/>
    <property type="match status" value="1"/>
</dbReference>
<dbReference type="PROSITE" id="PS00338">
    <property type="entry name" value="SOMATOTROPIN_2"/>
    <property type="match status" value="1"/>
</dbReference>
<accession>P12420</accession>
<accession>Q6UBP9</accession>
<evidence type="ECO:0000250" key="1"/>
<evidence type="ECO:0000250" key="2">
    <source>
        <dbReference type="UniProtKB" id="P01236"/>
    </source>
</evidence>
<evidence type="ECO:0000250" key="3">
    <source>
        <dbReference type="UniProtKB" id="P01239"/>
    </source>
</evidence>
<evidence type="ECO:0000269" key="4">
    <source>
    </source>
</evidence>
<evidence type="ECO:0000305" key="5"/>
<organism>
    <name type="scientific">Equus caballus</name>
    <name type="common">Horse</name>
    <dbReference type="NCBI Taxonomy" id="9796"/>
    <lineage>
        <taxon>Eukaryota</taxon>
        <taxon>Metazoa</taxon>
        <taxon>Chordata</taxon>
        <taxon>Craniata</taxon>
        <taxon>Vertebrata</taxon>
        <taxon>Euteleostomi</taxon>
        <taxon>Mammalia</taxon>
        <taxon>Eutheria</taxon>
        <taxon>Laurasiatheria</taxon>
        <taxon>Perissodactyla</taxon>
        <taxon>Equidae</taxon>
        <taxon>Equus</taxon>
    </lineage>
</organism>
<name>PRL_HORSE</name>
<reference key="1">
    <citation type="journal article" date="2003" name="Domest. Anim. Endocrinol.">
        <title>Cloning and nucleotide sequence of the equine and elk pituitary pre-prolactin cDNA.</title>
        <authorList>
            <person name="Clark R.J."/>
            <person name="Valderrama X.P."/>
            <person name="Furlan M.A."/>
            <person name="Chedrese P.J."/>
        </authorList>
    </citation>
    <scope>NUCLEOTIDE SEQUENCE [MRNA]</scope>
    <source>
        <tissue>Pituitary</tissue>
    </source>
</reference>
<reference key="2">
    <citation type="journal article" date="1988" name="Int. J. Pept. Protein Res.">
        <title>Primary structure of equine pituitary prolactin.</title>
        <authorList>
            <person name="Lehrman S.R."/>
            <person name="Lahm H.W."/>
            <person name="Miedel M.C."/>
            <person name="Hulmes J.D."/>
            <person name="Li C.H."/>
        </authorList>
    </citation>
    <scope>PROTEIN SEQUENCE OF 31-229</scope>
    <source>
        <tissue>Pituitary</tissue>
    </source>
</reference>
<gene>
    <name type="primary">PRL</name>
</gene>